<accession>Q4WQ87</accession>
<feature type="chain" id="PRO_0000383716" description="Cytosolic Fe-S cluster assembly factor nar1">
    <location>
        <begin position="1"/>
        <end position="597"/>
    </location>
</feature>
<feature type="region of interest" description="Disordered" evidence="3">
    <location>
        <begin position="25"/>
        <end position="46"/>
    </location>
</feature>
<feature type="region of interest" description="Disordered" evidence="3">
    <location>
        <begin position="424"/>
        <end position="449"/>
    </location>
</feature>
<feature type="compositionally biased region" description="Polar residues" evidence="3">
    <location>
        <begin position="432"/>
        <end position="444"/>
    </location>
</feature>
<feature type="binding site" evidence="2">
    <location>
        <position position="20"/>
    </location>
    <ligand>
        <name>[4Fe-4S] cluster</name>
        <dbReference type="ChEBI" id="CHEBI:49883"/>
        <label>1</label>
    </ligand>
</feature>
<feature type="binding site" evidence="2">
    <location>
        <position position="61"/>
    </location>
    <ligand>
        <name>[4Fe-4S] cluster</name>
        <dbReference type="ChEBI" id="CHEBI:49883"/>
        <label>1</label>
    </ligand>
</feature>
<feature type="binding site" evidence="2">
    <location>
        <position position="64"/>
    </location>
    <ligand>
        <name>[4Fe-4S] cluster</name>
        <dbReference type="ChEBI" id="CHEBI:49883"/>
        <label>1</label>
    </ligand>
</feature>
<feature type="binding site" evidence="2">
    <location>
        <position position="67"/>
    </location>
    <ligand>
        <name>[4Fe-4S] cluster</name>
        <dbReference type="ChEBI" id="CHEBI:49883"/>
        <label>1</label>
    </ligand>
</feature>
<feature type="binding site" evidence="2">
    <location>
        <position position="208"/>
    </location>
    <ligand>
        <name>[4Fe-4S] cluster</name>
        <dbReference type="ChEBI" id="CHEBI:49883"/>
        <label>2</label>
    </ligand>
</feature>
<feature type="binding site" evidence="2">
    <location>
        <position position="263"/>
    </location>
    <ligand>
        <name>[4Fe-4S] cluster</name>
        <dbReference type="ChEBI" id="CHEBI:49883"/>
        <label>2</label>
    </ligand>
</feature>
<feature type="binding site" evidence="2">
    <location>
        <position position="464"/>
    </location>
    <ligand>
        <name>[4Fe-4S] cluster</name>
        <dbReference type="ChEBI" id="CHEBI:49883"/>
        <label>2</label>
    </ligand>
</feature>
<feature type="binding site" evidence="2">
    <location>
        <position position="468"/>
    </location>
    <ligand>
        <name>[4Fe-4S] cluster</name>
        <dbReference type="ChEBI" id="CHEBI:49883"/>
        <label>2</label>
    </ligand>
</feature>
<protein>
    <recommendedName>
        <fullName>Cytosolic Fe-S cluster assembly factor nar1</fullName>
    </recommendedName>
    <alternativeName>
        <fullName>Nuclear architecture-related protein 1</fullName>
    </alternativeName>
</protein>
<organism>
    <name type="scientific">Aspergillus fumigatus (strain ATCC MYA-4609 / CBS 101355 / FGSC A1100 / Af293)</name>
    <name type="common">Neosartorya fumigata</name>
    <dbReference type="NCBI Taxonomy" id="330879"/>
    <lineage>
        <taxon>Eukaryota</taxon>
        <taxon>Fungi</taxon>
        <taxon>Dikarya</taxon>
        <taxon>Ascomycota</taxon>
        <taxon>Pezizomycotina</taxon>
        <taxon>Eurotiomycetes</taxon>
        <taxon>Eurotiomycetidae</taxon>
        <taxon>Eurotiales</taxon>
        <taxon>Aspergillaceae</taxon>
        <taxon>Aspergillus</taxon>
        <taxon>Aspergillus subgen. Fumigati</taxon>
    </lineage>
</organism>
<comment type="function">
    <text evidence="1">Component of the cytosolic Fe/S protein assembly machinery. Required for maturation of extramitochondrial Fe/S proteins. May play a role in the transfer of pre-assembled Fe/S clusters to target apoproteins (By similarity).</text>
</comment>
<comment type="similarity">
    <text evidence="4">Belongs to the NARF family.</text>
</comment>
<sequence length="597" mass="64361">MSAILSADDLNDFISPGVACIKPVESLPQKESQSENPYEVTKEDKVQPENLPPAQISLTDCLACSGCVTSAEAVLISLQSHTEVLNTLDSYPELPLGSTSYQRGTQKVGSADSDGRIFVASVSPQVRASLAATYGITEREAKYMIDQFLMGPHGLRAGGKHGNGFTWVVDTNVMREAVLALTADEVTSSLLSTGSGSLPKSPILSSACPGWICYAEKTHPFILPHLSRLKSPQALSGTFLKSVLSKALGVPPSQIWHLAIMPCFDKKLEASREELTDIAWASTFTQSQTTPVRDVDCVITTRELLTLATARGLSLPNLPLKPLPASCLTPFPDQALESFLFSKSSSGQTVESGTSGGYLHHVLQIFQARNPGSKIVTQRGRNADVVEYVLMSSGDEPLFRAARYYGFRNIQNLVRKLKPARVSRLPGAKPQAVSSSANRRQPMSRNAAPAGTGADYAYVEVMACPGGCTNGGGQIRIEDAREAVPNALKETSTETPVAAPKPTPHEQRAWLARVDEAYYSADSDSEGSVTTEPVSVLSRDNQIHEFLNYWSEKVDIPLSRLAYTSYREVESDVGKTKNAPNETARVVELAGKIGGGW</sequence>
<gene>
    <name type="primary">nar1</name>
    <name type="ORF">AFUA_4G11960</name>
</gene>
<keyword id="KW-0004">4Fe-4S</keyword>
<keyword id="KW-0408">Iron</keyword>
<keyword id="KW-0411">Iron-sulfur</keyword>
<keyword id="KW-0479">Metal-binding</keyword>
<keyword id="KW-0560">Oxidoreductase</keyword>
<keyword id="KW-1185">Reference proteome</keyword>
<dbReference type="EMBL" id="AAHF01000005">
    <property type="protein sequence ID" value="EAL89597.1"/>
    <property type="molecule type" value="Genomic_DNA"/>
</dbReference>
<dbReference type="RefSeq" id="XP_751635.1">
    <property type="nucleotide sequence ID" value="XM_746542.1"/>
</dbReference>
<dbReference type="SMR" id="Q4WQ87"/>
<dbReference type="FunCoup" id="Q4WQ87">
    <property type="interactions" value="369"/>
</dbReference>
<dbReference type="STRING" id="330879.Q4WQ87"/>
<dbReference type="EnsemblFungi" id="EAL89597">
    <property type="protein sequence ID" value="EAL89597"/>
    <property type="gene ID" value="AFUA_4G11960"/>
</dbReference>
<dbReference type="GeneID" id="3509141"/>
<dbReference type="KEGG" id="afm:AFUA_4G11960"/>
<dbReference type="VEuPathDB" id="FungiDB:Afu4g11960"/>
<dbReference type="eggNOG" id="KOG2439">
    <property type="taxonomic scope" value="Eukaryota"/>
</dbReference>
<dbReference type="HOGENOM" id="CLU_018240_0_1_1"/>
<dbReference type="InParanoid" id="Q4WQ87"/>
<dbReference type="OMA" id="GYLHHVL"/>
<dbReference type="OrthoDB" id="10253113at2759"/>
<dbReference type="Proteomes" id="UP000002530">
    <property type="component" value="Chromosome 4"/>
</dbReference>
<dbReference type="GO" id="GO:0097361">
    <property type="term" value="C:cytosolic [4Fe-4S] assembly targeting complex"/>
    <property type="evidence" value="ECO:0000318"/>
    <property type="project" value="GO_Central"/>
</dbReference>
<dbReference type="GO" id="GO:0051539">
    <property type="term" value="F:4 iron, 4 sulfur cluster binding"/>
    <property type="evidence" value="ECO:0007669"/>
    <property type="project" value="UniProtKB-KW"/>
</dbReference>
<dbReference type="GO" id="GO:0051536">
    <property type="term" value="F:iron-sulfur cluster binding"/>
    <property type="evidence" value="ECO:0000250"/>
    <property type="project" value="UniProtKB"/>
</dbReference>
<dbReference type="GO" id="GO:0046872">
    <property type="term" value="F:metal ion binding"/>
    <property type="evidence" value="ECO:0007669"/>
    <property type="project" value="UniProtKB-KW"/>
</dbReference>
<dbReference type="GO" id="GO:0016491">
    <property type="term" value="F:oxidoreductase activity"/>
    <property type="evidence" value="ECO:0007669"/>
    <property type="project" value="UniProtKB-KW"/>
</dbReference>
<dbReference type="GO" id="GO:0016226">
    <property type="term" value="P:iron-sulfur cluster assembly"/>
    <property type="evidence" value="ECO:0000250"/>
    <property type="project" value="UniProtKB"/>
</dbReference>
<dbReference type="FunFam" id="3.30.70.20:FF:000042">
    <property type="entry name" value="Cytosolic Fe-S cluster assembly factor NAR1"/>
    <property type="match status" value="1"/>
</dbReference>
<dbReference type="FunFam" id="3.40.50.1780:FF:000004">
    <property type="entry name" value="Cytosolic Fe-S cluster assembly factor nar1"/>
    <property type="match status" value="1"/>
</dbReference>
<dbReference type="FunFam" id="3.40.50.1780:FF:000009">
    <property type="entry name" value="Cytosolic Fe-S cluster assembly factor nar1"/>
    <property type="match status" value="1"/>
</dbReference>
<dbReference type="Gene3D" id="3.40.50.1780">
    <property type="match status" value="2"/>
</dbReference>
<dbReference type="Gene3D" id="3.40.950.10">
    <property type="entry name" value="Fe-only Hydrogenase (Larger Subunit), Chain L, domain 3"/>
    <property type="match status" value="2"/>
</dbReference>
<dbReference type="InterPro" id="IPR050340">
    <property type="entry name" value="Cytosolic_Fe-S_CAF"/>
</dbReference>
<dbReference type="InterPro" id="IPR009016">
    <property type="entry name" value="Fe_hydrogenase"/>
</dbReference>
<dbReference type="InterPro" id="IPR004108">
    <property type="entry name" value="Fe_hydrogenase_lsu_C"/>
</dbReference>
<dbReference type="PANTHER" id="PTHR11615">
    <property type="entry name" value="NITRATE, FORMATE, IRON DEHYDROGENASE"/>
    <property type="match status" value="1"/>
</dbReference>
<dbReference type="Pfam" id="PF02906">
    <property type="entry name" value="Fe_hyd_lg_C"/>
    <property type="match status" value="1"/>
</dbReference>
<dbReference type="SUPFAM" id="SSF53920">
    <property type="entry name" value="Fe-only hydrogenase"/>
    <property type="match status" value="1"/>
</dbReference>
<proteinExistence type="inferred from homology"/>
<reference key="1">
    <citation type="journal article" date="2005" name="Nature">
        <title>Genomic sequence of the pathogenic and allergenic filamentous fungus Aspergillus fumigatus.</title>
        <authorList>
            <person name="Nierman W.C."/>
            <person name="Pain A."/>
            <person name="Anderson M.J."/>
            <person name="Wortman J.R."/>
            <person name="Kim H.S."/>
            <person name="Arroyo J."/>
            <person name="Berriman M."/>
            <person name="Abe K."/>
            <person name="Archer D.B."/>
            <person name="Bermejo C."/>
            <person name="Bennett J.W."/>
            <person name="Bowyer P."/>
            <person name="Chen D."/>
            <person name="Collins M."/>
            <person name="Coulsen R."/>
            <person name="Davies R."/>
            <person name="Dyer P.S."/>
            <person name="Farman M.L."/>
            <person name="Fedorova N."/>
            <person name="Fedorova N.D."/>
            <person name="Feldblyum T.V."/>
            <person name="Fischer R."/>
            <person name="Fosker N."/>
            <person name="Fraser A."/>
            <person name="Garcia J.L."/>
            <person name="Garcia M.J."/>
            <person name="Goble A."/>
            <person name="Goldman G.H."/>
            <person name="Gomi K."/>
            <person name="Griffith-Jones S."/>
            <person name="Gwilliam R."/>
            <person name="Haas B.J."/>
            <person name="Haas H."/>
            <person name="Harris D.E."/>
            <person name="Horiuchi H."/>
            <person name="Huang J."/>
            <person name="Humphray S."/>
            <person name="Jimenez J."/>
            <person name="Keller N."/>
            <person name="Khouri H."/>
            <person name="Kitamoto K."/>
            <person name="Kobayashi T."/>
            <person name="Konzack S."/>
            <person name="Kulkarni R."/>
            <person name="Kumagai T."/>
            <person name="Lafton A."/>
            <person name="Latge J.-P."/>
            <person name="Li W."/>
            <person name="Lord A."/>
            <person name="Lu C."/>
            <person name="Majoros W.H."/>
            <person name="May G.S."/>
            <person name="Miller B.L."/>
            <person name="Mohamoud Y."/>
            <person name="Molina M."/>
            <person name="Monod M."/>
            <person name="Mouyna I."/>
            <person name="Mulligan S."/>
            <person name="Murphy L.D."/>
            <person name="O'Neil S."/>
            <person name="Paulsen I."/>
            <person name="Penalva M.A."/>
            <person name="Pertea M."/>
            <person name="Price C."/>
            <person name="Pritchard B.L."/>
            <person name="Quail M.A."/>
            <person name="Rabbinowitsch E."/>
            <person name="Rawlins N."/>
            <person name="Rajandream M.A."/>
            <person name="Reichard U."/>
            <person name="Renauld H."/>
            <person name="Robson G.D."/>
            <person name="Rodriguez de Cordoba S."/>
            <person name="Rodriguez-Pena J.M."/>
            <person name="Ronning C.M."/>
            <person name="Rutter S."/>
            <person name="Salzberg S.L."/>
            <person name="Sanchez M."/>
            <person name="Sanchez-Ferrero J.C."/>
            <person name="Saunders D."/>
            <person name="Seeger K."/>
            <person name="Squares R."/>
            <person name="Squares S."/>
            <person name="Takeuchi M."/>
            <person name="Tekaia F."/>
            <person name="Turner G."/>
            <person name="Vazquez de Aldana C.R."/>
            <person name="Weidman J."/>
            <person name="White O."/>
            <person name="Woodward J.R."/>
            <person name="Yu J.-H."/>
            <person name="Fraser C.M."/>
            <person name="Galagan J.E."/>
            <person name="Asai K."/>
            <person name="Machida M."/>
            <person name="Hall N."/>
            <person name="Barrell B.G."/>
            <person name="Denning D.W."/>
        </authorList>
    </citation>
    <scope>NUCLEOTIDE SEQUENCE [LARGE SCALE GENOMIC DNA]</scope>
    <source>
        <strain>ATCC MYA-4609 / CBS 101355 / FGSC A1100 / Af293</strain>
    </source>
</reference>
<evidence type="ECO:0000250" key="1"/>
<evidence type="ECO:0000255" key="2"/>
<evidence type="ECO:0000256" key="3">
    <source>
        <dbReference type="SAM" id="MobiDB-lite"/>
    </source>
</evidence>
<evidence type="ECO:0000305" key="4"/>
<name>NAR1_ASPFU</name>